<comment type="function">
    <text evidence="1">Catalyzes the irreversible NADPH-dependent deamination of GMP to IMP. It functions in the conversion of nucleobase, nucleoside and nucleotide derivatives of G to A nucleotides, and in maintaining the intracellular balance of A and G nucleotides.</text>
</comment>
<comment type="catalytic activity">
    <reaction evidence="1">
        <text>IMP + NH4(+) + NADP(+) = GMP + NADPH + 2 H(+)</text>
        <dbReference type="Rhea" id="RHEA:17185"/>
        <dbReference type="ChEBI" id="CHEBI:15378"/>
        <dbReference type="ChEBI" id="CHEBI:28938"/>
        <dbReference type="ChEBI" id="CHEBI:57783"/>
        <dbReference type="ChEBI" id="CHEBI:58053"/>
        <dbReference type="ChEBI" id="CHEBI:58115"/>
        <dbReference type="ChEBI" id="CHEBI:58349"/>
        <dbReference type="EC" id="1.7.1.7"/>
    </reaction>
</comment>
<comment type="similarity">
    <text evidence="1">Belongs to the IMPDH/GMPR family. GuaC type 2 subfamily.</text>
</comment>
<sequence length="328" mass="35982">MLNEFPIFDYEDIQLIPNKCVIKSRAEADTSVTLGNHTFKLPVVPANMQTILDENVAEQLAKGGYFYIMHRFDEAGRIPFIKRMHDQGLIASISVGVKDYEYDFVRQLKTDAPEYITIDIAHGHADSVISMIQHIKKELPDTFVIAGNVGTPEAVRELENAGADATKVGIGPGKVCITKVKTGFGTGGWQLAALRWCAKAARKPIIADGGIRTHGDIAKSIRFGASMIMIGSLFAGHIESPGKTIEVDGEQFKEYYGSASQYQKGAYKNVEGKRILLPAKGHLQDTLTEMEQDLQSAISYAGGRQVADLKHVDYVIVKNSIWNGDASH</sequence>
<name>GUAC_STRZT</name>
<protein>
    <recommendedName>
        <fullName evidence="1">GMP reductase</fullName>
        <ecNumber evidence="1">1.7.1.7</ecNumber>
    </recommendedName>
    <alternativeName>
        <fullName evidence="1">Guanosine 5'-monophosphate oxidoreductase</fullName>
        <shortName evidence="1">Guanosine monophosphate reductase</shortName>
    </alternativeName>
</protein>
<accession>C1CR55</accession>
<evidence type="ECO:0000255" key="1">
    <source>
        <dbReference type="HAMAP-Rule" id="MF_01511"/>
    </source>
</evidence>
<keyword id="KW-0521">NADP</keyword>
<keyword id="KW-0560">Oxidoreductase</keyword>
<organism>
    <name type="scientific">Streptococcus pneumoniae (strain Taiwan19F-14)</name>
    <dbReference type="NCBI Taxonomy" id="487213"/>
    <lineage>
        <taxon>Bacteria</taxon>
        <taxon>Bacillati</taxon>
        <taxon>Bacillota</taxon>
        <taxon>Bacilli</taxon>
        <taxon>Lactobacillales</taxon>
        <taxon>Streptococcaceae</taxon>
        <taxon>Streptococcus</taxon>
    </lineage>
</organism>
<reference key="1">
    <citation type="journal article" date="2010" name="Genome Biol.">
        <title>Structure and dynamics of the pan-genome of Streptococcus pneumoniae and closely related species.</title>
        <authorList>
            <person name="Donati C."/>
            <person name="Hiller N.L."/>
            <person name="Tettelin H."/>
            <person name="Muzzi A."/>
            <person name="Croucher N.J."/>
            <person name="Angiuoli S.V."/>
            <person name="Oggioni M."/>
            <person name="Dunning Hotopp J.C."/>
            <person name="Hu F.Z."/>
            <person name="Riley D.R."/>
            <person name="Covacci A."/>
            <person name="Mitchell T.J."/>
            <person name="Bentley S.D."/>
            <person name="Kilian M."/>
            <person name="Ehrlich G.D."/>
            <person name="Rappuoli R."/>
            <person name="Moxon E.R."/>
            <person name="Masignani V."/>
        </authorList>
    </citation>
    <scope>NUCLEOTIDE SEQUENCE [LARGE SCALE GENOMIC DNA]</scope>
    <source>
        <strain>Taiwan19F-14</strain>
    </source>
</reference>
<feature type="chain" id="PRO_1000185061" description="GMP reductase">
    <location>
        <begin position="1"/>
        <end position="328"/>
    </location>
</feature>
<feature type="active site" description="Thioimidate intermediate" evidence="1">
    <location>
        <position position="176"/>
    </location>
</feature>
<feature type="binding site" evidence="1">
    <location>
        <begin position="205"/>
        <end position="228"/>
    </location>
    <ligand>
        <name>NADP(+)</name>
        <dbReference type="ChEBI" id="CHEBI:58349"/>
    </ligand>
</feature>
<dbReference type="EC" id="1.7.1.7" evidence="1"/>
<dbReference type="EMBL" id="CP000921">
    <property type="protein sequence ID" value="ACO23912.1"/>
    <property type="molecule type" value="Genomic_DNA"/>
</dbReference>
<dbReference type="RefSeq" id="WP_000931158.1">
    <property type="nucleotide sequence ID" value="NC_012469.1"/>
</dbReference>
<dbReference type="SMR" id="C1CR55"/>
<dbReference type="KEGG" id="snt:SPT_0979"/>
<dbReference type="HOGENOM" id="CLU_022552_5_0_9"/>
<dbReference type="GO" id="GO:0005829">
    <property type="term" value="C:cytosol"/>
    <property type="evidence" value="ECO:0007669"/>
    <property type="project" value="TreeGrafter"/>
</dbReference>
<dbReference type="GO" id="GO:1902560">
    <property type="term" value="C:GMP reductase complex"/>
    <property type="evidence" value="ECO:0007669"/>
    <property type="project" value="InterPro"/>
</dbReference>
<dbReference type="GO" id="GO:0003920">
    <property type="term" value="F:GMP reductase activity"/>
    <property type="evidence" value="ECO:0007669"/>
    <property type="project" value="UniProtKB-UniRule"/>
</dbReference>
<dbReference type="GO" id="GO:0006163">
    <property type="term" value="P:purine nucleotide metabolic process"/>
    <property type="evidence" value="ECO:0007669"/>
    <property type="project" value="UniProtKB-UniRule"/>
</dbReference>
<dbReference type="CDD" id="cd00381">
    <property type="entry name" value="IMPDH"/>
    <property type="match status" value="1"/>
</dbReference>
<dbReference type="FunFam" id="3.20.20.70:FF:000079">
    <property type="entry name" value="GMP reductase"/>
    <property type="match status" value="1"/>
</dbReference>
<dbReference type="Gene3D" id="3.20.20.70">
    <property type="entry name" value="Aldolase class I"/>
    <property type="match status" value="1"/>
</dbReference>
<dbReference type="HAMAP" id="MF_01511">
    <property type="entry name" value="GMP_reduct_type2"/>
    <property type="match status" value="1"/>
</dbReference>
<dbReference type="InterPro" id="IPR013785">
    <property type="entry name" value="Aldolase_TIM"/>
</dbReference>
<dbReference type="InterPro" id="IPR050139">
    <property type="entry name" value="GMP_reductase"/>
</dbReference>
<dbReference type="InterPro" id="IPR005994">
    <property type="entry name" value="GuaC_type_2"/>
</dbReference>
<dbReference type="InterPro" id="IPR015875">
    <property type="entry name" value="IMP_DH/GMP_Rdtase_CS"/>
</dbReference>
<dbReference type="InterPro" id="IPR001093">
    <property type="entry name" value="IMP_DH_GMPRt"/>
</dbReference>
<dbReference type="NCBIfam" id="TIGR01306">
    <property type="entry name" value="GMP_reduct_2"/>
    <property type="match status" value="1"/>
</dbReference>
<dbReference type="NCBIfam" id="NF003966">
    <property type="entry name" value="PRK05458.1"/>
    <property type="match status" value="1"/>
</dbReference>
<dbReference type="PANTHER" id="PTHR43170">
    <property type="entry name" value="GMP REDUCTASE"/>
    <property type="match status" value="1"/>
</dbReference>
<dbReference type="PANTHER" id="PTHR43170:SF5">
    <property type="entry name" value="GMP REDUCTASE"/>
    <property type="match status" value="1"/>
</dbReference>
<dbReference type="Pfam" id="PF00478">
    <property type="entry name" value="IMPDH"/>
    <property type="match status" value="1"/>
</dbReference>
<dbReference type="PIRSF" id="PIRSF036500">
    <property type="entry name" value="GMP_red_Firmic"/>
    <property type="match status" value="1"/>
</dbReference>
<dbReference type="SMART" id="SM01240">
    <property type="entry name" value="IMPDH"/>
    <property type="match status" value="1"/>
</dbReference>
<dbReference type="SUPFAM" id="SSF51412">
    <property type="entry name" value="Inosine monophosphate dehydrogenase (IMPDH)"/>
    <property type="match status" value="1"/>
</dbReference>
<dbReference type="PROSITE" id="PS00487">
    <property type="entry name" value="IMP_DH_GMP_RED"/>
    <property type="match status" value="1"/>
</dbReference>
<gene>
    <name evidence="1" type="primary">guaC</name>
    <name type="ordered locus">SPT_0979</name>
</gene>
<proteinExistence type="inferred from homology"/>